<sequence>MSRKEIYEPRPRYPDGYNGNRAVKKSLSVLSLDNMKSTLSGLFAPLKLDEEQAEDDESLSSYEDYASRQIDDDLKKQRKKGITFIDYSSLITFFCKLCVIFGLGFVFTYLAEQIVQDAKLPLLTVNLKSWKFEPPWPAIFGFVAVILGLSYRRMDTKYPLGAAPLRPSQSSKWQWISRYLAAFATLLLSMKKLLFISNSHSIVALVASSASIWYIFDRSRNGIILSTITSVLGSILYYNLVDTSKIELNGVEFPEIQFRLWIPMILFSASTIVGNAGRLLF</sequence>
<name>INS1_SCHPO</name>
<feature type="chain" id="PRO_0000339168" description="INSIG family protein">
    <location>
        <begin position="1"/>
        <end position="281"/>
    </location>
</feature>
<feature type="topological domain" description="Cytoplasmic" evidence="5">
    <location>
        <begin position="1"/>
        <end position="93"/>
    </location>
</feature>
<feature type="transmembrane region" description="Helical; Name=1" evidence="1">
    <location>
        <begin position="94"/>
        <end position="120"/>
    </location>
</feature>
<feature type="topological domain" description="Lumenal" evidence="5">
    <location>
        <begin position="121"/>
        <end position="134"/>
    </location>
</feature>
<feature type="transmembrane region" description="Helical; Name=2" evidence="1">
    <location>
        <begin position="135"/>
        <end position="159"/>
    </location>
</feature>
<feature type="topological domain" description="Cytoplasmic" evidence="5">
    <location>
        <begin position="160"/>
        <end position="170"/>
    </location>
</feature>
<feature type="transmembrane region" description="Helical; Name=3" evidence="1">
    <location>
        <begin position="171"/>
        <end position="186"/>
    </location>
</feature>
<feature type="topological domain" description="Lumenal" evidence="5">
    <location>
        <begin position="187"/>
        <end position="189"/>
    </location>
</feature>
<feature type="transmembrane region" description="Helical; Name=4" evidence="1">
    <location>
        <begin position="190"/>
        <end position="215"/>
    </location>
</feature>
<feature type="topological domain" description="Cytoplasmic" evidence="5">
    <location>
        <begin position="216"/>
        <end position="221"/>
    </location>
</feature>
<feature type="transmembrane region" description="Helical; Name=5" evidence="1">
    <location>
        <begin position="222"/>
        <end position="256"/>
    </location>
</feature>
<feature type="topological domain" description="Lumenal" evidence="5">
    <location>
        <begin position="257"/>
        <end position="260"/>
    </location>
</feature>
<feature type="transmembrane region" description="Helical; Name=6" evidence="2">
    <location>
        <begin position="261"/>
        <end position="281"/>
    </location>
</feature>
<feature type="modified residue" description="Phosphoserine" evidence="4">
    <location>
        <position position="28"/>
    </location>
</feature>
<dbReference type="EMBL" id="CU329672">
    <property type="protein sequence ID" value="CAB41653.1"/>
    <property type="molecule type" value="Genomic_DNA"/>
</dbReference>
<dbReference type="PIR" id="T41283">
    <property type="entry name" value="T41283"/>
</dbReference>
<dbReference type="RefSeq" id="NP_587813.1">
    <property type="nucleotide sequence ID" value="NM_001022806.2"/>
</dbReference>
<dbReference type="SMR" id="Q9Y7R5"/>
<dbReference type="BioGRID" id="275939">
    <property type="interactions" value="12"/>
</dbReference>
<dbReference type="FunCoup" id="Q9Y7R5">
    <property type="interactions" value="148"/>
</dbReference>
<dbReference type="STRING" id="284812.Q9Y7R5"/>
<dbReference type="iPTMnet" id="Q9Y7R5"/>
<dbReference type="PaxDb" id="4896-SPCC306.05c.1"/>
<dbReference type="EnsemblFungi" id="SPCC306.05c.1">
    <property type="protein sequence ID" value="SPCC306.05c.1:pep"/>
    <property type="gene ID" value="SPCC306.05c"/>
</dbReference>
<dbReference type="GeneID" id="2539373"/>
<dbReference type="KEGG" id="spo:2539373"/>
<dbReference type="PomBase" id="SPCC306.05c">
    <property type="gene designation" value="ins1"/>
</dbReference>
<dbReference type="VEuPathDB" id="FungiDB:SPCC306.05c"/>
<dbReference type="eggNOG" id="KOG4363">
    <property type="taxonomic scope" value="Eukaryota"/>
</dbReference>
<dbReference type="HOGENOM" id="CLU_963648_0_0_1"/>
<dbReference type="InParanoid" id="Q9Y7R5"/>
<dbReference type="OMA" id="WIPMILF"/>
<dbReference type="PhylomeDB" id="Q9Y7R5"/>
<dbReference type="PRO" id="PR:Q9Y7R5"/>
<dbReference type="Proteomes" id="UP000002485">
    <property type="component" value="Chromosome III"/>
</dbReference>
<dbReference type="GO" id="GO:0005783">
    <property type="term" value="C:endoplasmic reticulum"/>
    <property type="evidence" value="ECO:0007005"/>
    <property type="project" value="PomBase"/>
</dbReference>
<dbReference type="GO" id="GO:0005789">
    <property type="term" value="C:endoplasmic reticulum membrane"/>
    <property type="evidence" value="ECO:0007669"/>
    <property type="project" value="UniProtKB-SubCell"/>
</dbReference>
<dbReference type="GO" id="GO:0044183">
    <property type="term" value="F:protein folding chaperone"/>
    <property type="evidence" value="ECO:0000266"/>
    <property type="project" value="PomBase"/>
</dbReference>
<dbReference type="GO" id="GO:0006696">
    <property type="term" value="P:ergosterol biosynthetic process"/>
    <property type="evidence" value="ECO:0000314"/>
    <property type="project" value="PomBase"/>
</dbReference>
<dbReference type="GO" id="GO:0016126">
    <property type="term" value="P:sterol biosynthetic process"/>
    <property type="evidence" value="ECO:0000318"/>
    <property type="project" value="GO_Central"/>
</dbReference>
<dbReference type="InterPro" id="IPR025929">
    <property type="entry name" value="INSIG_fam"/>
</dbReference>
<dbReference type="PANTHER" id="PTHR15301">
    <property type="entry name" value="INSULIN-INDUCED GENE 1"/>
    <property type="match status" value="1"/>
</dbReference>
<dbReference type="PANTHER" id="PTHR15301:SF3">
    <property type="entry name" value="PROTEIN NSG1-RELATED"/>
    <property type="match status" value="1"/>
</dbReference>
<dbReference type="Pfam" id="PF07281">
    <property type="entry name" value="INSIG"/>
    <property type="match status" value="1"/>
</dbReference>
<keyword id="KW-0256">Endoplasmic reticulum</keyword>
<keyword id="KW-0472">Membrane</keyword>
<keyword id="KW-0597">Phosphoprotein</keyword>
<keyword id="KW-1185">Reference proteome</keyword>
<keyword id="KW-0812">Transmembrane</keyword>
<keyword id="KW-1133">Transmembrane helix</keyword>
<protein>
    <recommendedName>
        <fullName>INSIG family protein</fullName>
    </recommendedName>
</protein>
<proteinExistence type="evidence at protein level"/>
<accession>Q9Y7R5</accession>
<gene>
    <name type="primary">ins1</name>
    <name type="ORF">SPCC306.05c</name>
</gene>
<evidence type="ECO:0000250" key="1">
    <source>
        <dbReference type="UniProtKB" id="A1T557"/>
    </source>
</evidence>
<evidence type="ECO:0000255" key="2"/>
<evidence type="ECO:0000269" key="3">
    <source>
    </source>
</evidence>
<evidence type="ECO:0000269" key="4">
    <source>
    </source>
</evidence>
<evidence type="ECO:0000305" key="5"/>
<organism>
    <name type="scientific">Schizosaccharomyces pombe (strain 972 / ATCC 24843)</name>
    <name type="common">Fission yeast</name>
    <dbReference type="NCBI Taxonomy" id="284812"/>
    <lineage>
        <taxon>Eukaryota</taxon>
        <taxon>Fungi</taxon>
        <taxon>Dikarya</taxon>
        <taxon>Ascomycota</taxon>
        <taxon>Taphrinomycotina</taxon>
        <taxon>Schizosaccharomycetes</taxon>
        <taxon>Schizosaccharomycetales</taxon>
        <taxon>Schizosaccharomycetaceae</taxon>
        <taxon>Schizosaccharomyces</taxon>
    </lineage>
</organism>
<reference key="1">
    <citation type="journal article" date="2002" name="Nature">
        <title>The genome sequence of Schizosaccharomyces pombe.</title>
        <authorList>
            <person name="Wood V."/>
            <person name="Gwilliam R."/>
            <person name="Rajandream M.A."/>
            <person name="Lyne M.H."/>
            <person name="Lyne R."/>
            <person name="Stewart A."/>
            <person name="Sgouros J.G."/>
            <person name="Peat N."/>
            <person name="Hayles J."/>
            <person name="Baker S.G."/>
            <person name="Basham D."/>
            <person name="Bowman S."/>
            <person name="Brooks K."/>
            <person name="Brown D."/>
            <person name="Brown S."/>
            <person name="Chillingworth T."/>
            <person name="Churcher C.M."/>
            <person name="Collins M."/>
            <person name="Connor R."/>
            <person name="Cronin A."/>
            <person name="Davis P."/>
            <person name="Feltwell T."/>
            <person name="Fraser A."/>
            <person name="Gentles S."/>
            <person name="Goble A."/>
            <person name="Hamlin N."/>
            <person name="Harris D.E."/>
            <person name="Hidalgo J."/>
            <person name="Hodgson G."/>
            <person name="Holroyd S."/>
            <person name="Hornsby T."/>
            <person name="Howarth S."/>
            <person name="Huckle E.J."/>
            <person name="Hunt S."/>
            <person name="Jagels K."/>
            <person name="James K.D."/>
            <person name="Jones L."/>
            <person name="Jones M."/>
            <person name="Leather S."/>
            <person name="McDonald S."/>
            <person name="McLean J."/>
            <person name="Mooney P."/>
            <person name="Moule S."/>
            <person name="Mungall K.L."/>
            <person name="Murphy L.D."/>
            <person name="Niblett D."/>
            <person name="Odell C."/>
            <person name="Oliver K."/>
            <person name="O'Neil S."/>
            <person name="Pearson D."/>
            <person name="Quail M.A."/>
            <person name="Rabbinowitsch E."/>
            <person name="Rutherford K.M."/>
            <person name="Rutter S."/>
            <person name="Saunders D."/>
            <person name="Seeger K."/>
            <person name="Sharp S."/>
            <person name="Skelton J."/>
            <person name="Simmonds M.N."/>
            <person name="Squares R."/>
            <person name="Squares S."/>
            <person name="Stevens K."/>
            <person name="Taylor K."/>
            <person name="Taylor R.G."/>
            <person name="Tivey A."/>
            <person name="Walsh S.V."/>
            <person name="Warren T."/>
            <person name="Whitehead S."/>
            <person name="Woodward J.R."/>
            <person name="Volckaert G."/>
            <person name="Aert R."/>
            <person name="Robben J."/>
            <person name="Grymonprez B."/>
            <person name="Weltjens I."/>
            <person name="Vanstreels E."/>
            <person name="Rieger M."/>
            <person name="Schaefer M."/>
            <person name="Mueller-Auer S."/>
            <person name="Gabel C."/>
            <person name="Fuchs M."/>
            <person name="Duesterhoeft A."/>
            <person name="Fritzc C."/>
            <person name="Holzer E."/>
            <person name="Moestl D."/>
            <person name="Hilbert H."/>
            <person name="Borzym K."/>
            <person name="Langer I."/>
            <person name="Beck A."/>
            <person name="Lehrach H."/>
            <person name="Reinhardt R."/>
            <person name="Pohl T.M."/>
            <person name="Eger P."/>
            <person name="Zimmermann W."/>
            <person name="Wedler H."/>
            <person name="Wambutt R."/>
            <person name="Purnelle B."/>
            <person name="Goffeau A."/>
            <person name="Cadieu E."/>
            <person name="Dreano S."/>
            <person name="Gloux S."/>
            <person name="Lelaure V."/>
            <person name="Mottier S."/>
            <person name="Galibert F."/>
            <person name="Aves S.J."/>
            <person name="Xiang Z."/>
            <person name="Hunt C."/>
            <person name="Moore K."/>
            <person name="Hurst S.M."/>
            <person name="Lucas M."/>
            <person name="Rochet M."/>
            <person name="Gaillardin C."/>
            <person name="Tallada V.A."/>
            <person name="Garzon A."/>
            <person name="Thode G."/>
            <person name="Daga R.R."/>
            <person name="Cruzado L."/>
            <person name="Jimenez J."/>
            <person name="Sanchez M."/>
            <person name="del Rey F."/>
            <person name="Benito J."/>
            <person name="Dominguez A."/>
            <person name="Revuelta J.L."/>
            <person name="Moreno S."/>
            <person name="Armstrong J."/>
            <person name="Forsburg S.L."/>
            <person name="Cerutti L."/>
            <person name="Lowe T."/>
            <person name="McCombie W.R."/>
            <person name="Paulsen I."/>
            <person name="Potashkin J."/>
            <person name="Shpakovski G.V."/>
            <person name="Ussery D."/>
            <person name="Barrell B.G."/>
            <person name="Nurse P."/>
        </authorList>
    </citation>
    <scope>NUCLEOTIDE SEQUENCE [LARGE SCALE GENOMIC DNA]</scope>
    <source>
        <strain>972 / ATCC 24843</strain>
    </source>
</reference>
<reference key="2">
    <citation type="journal article" date="2006" name="Nat. Biotechnol.">
        <title>ORFeome cloning and global analysis of protein localization in the fission yeast Schizosaccharomyces pombe.</title>
        <authorList>
            <person name="Matsuyama A."/>
            <person name="Arai R."/>
            <person name="Yashiroda Y."/>
            <person name="Shirai A."/>
            <person name="Kamata A."/>
            <person name="Sekido S."/>
            <person name="Kobayashi Y."/>
            <person name="Hashimoto A."/>
            <person name="Hamamoto M."/>
            <person name="Hiraoka Y."/>
            <person name="Horinouchi S."/>
            <person name="Yoshida M."/>
        </authorList>
    </citation>
    <scope>SUBCELLULAR LOCATION [LARGE SCALE ANALYSIS]</scope>
</reference>
<reference key="3">
    <citation type="journal article" date="2008" name="J. Proteome Res.">
        <title>Phosphoproteome analysis of fission yeast.</title>
        <authorList>
            <person name="Wilson-Grady J.T."/>
            <person name="Villen J."/>
            <person name="Gygi S.P."/>
        </authorList>
    </citation>
    <scope>PHOSPHORYLATION [LARGE SCALE ANALYSIS] AT SER-28</scope>
    <scope>IDENTIFICATION BY MASS SPECTROMETRY</scope>
</reference>
<comment type="subcellular location">
    <subcellularLocation>
        <location evidence="3">Endoplasmic reticulum membrane</location>
        <topology evidence="3">Multi-pass membrane protein</topology>
    </subcellularLocation>
</comment>
<comment type="similarity">
    <text evidence="5">Belongs to the INSIG family.</text>
</comment>